<keyword id="KW-0963">Cytoplasm</keyword>
<keyword id="KW-0489">Methyltransferase</keyword>
<keyword id="KW-0694">RNA-binding</keyword>
<keyword id="KW-0698">rRNA processing</keyword>
<keyword id="KW-0949">S-adenosyl-L-methionine</keyword>
<keyword id="KW-0808">Transferase</keyword>
<proteinExistence type="inferred from homology"/>
<feature type="chain" id="PRO_0000101470" description="Ribosomal RNA small subunit methyltransferase A">
    <location>
        <begin position="1"/>
        <end position="274"/>
    </location>
</feature>
<feature type="binding site" evidence="1">
    <location>
        <position position="27"/>
    </location>
    <ligand>
        <name>S-adenosyl-L-methionine</name>
        <dbReference type="ChEBI" id="CHEBI:59789"/>
    </ligand>
</feature>
<feature type="binding site" evidence="1">
    <location>
        <position position="29"/>
    </location>
    <ligand>
        <name>S-adenosyl-L-methionine</name>
        <dbReference type="ChEBI" id="CHEBI:59789"/>
    </ligand>
</feature>
<feature type="binding site" evidence="1">
    <location>
        <position position="54"/>
    </location>
    <ligand>
        <name>S-adenosyl-L-methionine</name>
        <dbReference type="ChEBI" id="CHEBI:59789"/>
    </ligand>
</feature>
<feature type="binding site" evidence="1">
    <location>
        <position position="75"/>
    </location>
    <ligand>
        <name>S-adenosyl-L-methionine</name>
        <dbReference type="ChEBI" id="CHEBI:59789"/>
    </ligand>
</feature>
<feature type="binding site" evidence="1">
    <location>
        <position position="100"/>
    </location>
    <ligand>
        <name>S-adenosyl-L-methionine</name>
        <dbReference type="ChEBI" id="CHEBI:59789"/>
    </ligand>
</feature>
<feature type="binding site" evidence="1">
    <location>
        <position position="121"/>
    </location>
    <ligand>
        <name>S-adenosyl-L-methionine</name>
        <dbReference type="ChEBI" id="CHEBI:59789"/>
    </ligand>
</feature>
<dbReference type="EC" id="2.1.1.182" evidence="1"/>
<dbReference type="EMBL" id="CR543861">
    <property type="protein sequence ID" value="CAG69715.1"/>
    <property type="molecule type" value="Genomic_DNA"/>
</dbReference>
<dbReference type="SMR" id="Q6F8A0"/>
<dbReference type="STRING" id="202950.GCA_001485005_02808"/>
<dbReference type="KEGG" id="aci:ACIAD3009"/>
<dbReference type="eggNOG" id="COG0030">
    <property type="taxonomic scope" value="Bacteria"/>
</dbReference>
<dbReference type="HOGENOM" id="CLU_041220_0_1_6"/>
<dbReference type="Proteomes" id="UP000000430">
    <property type="component" value="Chromosome"/>
</dbReference>
<dbReference type="GO" id="GO:0005829">
    <property type="term" value="C:cytosol"/>
    <property type="evidence" value="ECO:0007669"/>
    <property type="project" value="TreeGrafter"/>
</dbReference>
<dbReference type="GO" id="GO:0052908">
    <property type="term" value="F:16S rRNA (adenine(1518)-N(6)/adenine(1519)-N(6))-dimethyltransferase activity"/>
    <property type="evidence" value="ECO:0007669"/>
    <property type="project" value="UniProtKB-EC"/>
</dbReference>
<dbReference type="GO" id="GO:0003723">
    <property type="term" value="F:RNA binding"/>
    <property type="evidence" value="ECO:0007669"/>
    <property type="project" value="UniProtKB-KW"/>
</dbReference>
<dbReference type="FunFam" id="1.10.8.100:FF:000001">
    <property type="entry name" value="Ribosomal RNA small subunit methyltransferase A"/>
    <property type="match status" value="1"/>
</dbReference>
<dbReference type="Gene3D" id="1.10.8.100">
    <property type="entry name" value="Ribosomal RNA adenine dimethylase-like, domain 2"/>
    <property type="match status" value="1"/>
</dbReference>
<dbReference type="Gene3D" id="3.40.50.150">
    <property type="entry name" value="Vaccinia Virus protein VP39"/>
    <property type="match status" value="1"/>
</dbReference>
<dbReference type="HAMAP" id="MF_00607">
    <property type="entry name" value="16SrRNA_methyltr_A"/>
    <property type="match status" value="1"/>
</dbReference>
<dbReference type="InterPro" id="IPR001737">
    <property type="entry name" value="KsgA/Erm"/>
</dbReference>
<dbReference type="InterPro" id="IPR023165">
    <property type="entry name" value="rRNA_Ade_diMease-like_C"/>
</dbReference>
<dbReference type="InterPro" id="IPR020596">
    <property type="entry name" value="rRNA_Ade_Mease_Trfase_CS"/>
</dbReference>
<dbReference type="InterPro" id="IPR020598">
    <property type="entry name" value="rRNA_Ade_methylase_Trfase_N"/>
</dbReference>
<dbReference type="InterPro" id="IPR011530">
    <property type="entry name" value="rRNA_adenine_dimethylase"/>
</dbReference>
<dbReference type="InterPro" id="IPR029063">
    <property type="entry name" value="SAM-dependent_MTases_sf"/>
</dbReference>
<dbReference type="NCBIfam" id="TIGR00755">
    <property type="entry name" value="ksgA"/>
    <property type="match status" value="1"/>
</dbReference>
<dbReference type="PANTHER" id="PTHR11727">
    <property type="entry name" value="DIMETHYLADENOSINE TRANSFERASE"/>
    <property type="match status" value="1"/>
</dbReference>
<dbReference type="PANTHER" id="PTHR11727:SF7">
    <property type="entry name" value="DIMETHYLADENOSINE TRANSFERASE-RELATED"/>
    <property type="match status" value="1"/>
</dbReference>
<dbReference type="Pfam" id="PF00398">
    <property type="entry name" value="RrnaAD"/>
    <property type="match status" value="1"/>
</dbReference>
<dbReference type="SMART" id="SM00650">
    <property type="entry name" value="rADc"/>
    <property type="match status" value="1"/>
</dbReference>
<dbReference type="SUPFAM" id="SSF53335">
    <property type="entry name" value="S-adenosyl-L-methionine-dependent methyltransferases"/>
    <property type="match status" value="1"/>
</dbReference>
<dbReference type="PROSITE" id="PS01131">
    <property type="entry name" value="RRNA_A_DIMETH"/>
    <property type="match status" value="1"/>
</dbReference>
<dbReference type="PROSITE" id="PS51689">
    <property type="entry name" value="SAM_RNA_A_N6_MT"/>
    <property type="match status" value="1"/>
</dbReference>
<comment type="function">
    <text evidence="1">Specifically dimethylates two adjacent adenosines (A1518 and A1519) in the loop of a conserved hairpin near the 3'-end of 16S rRNA in the 30S particle. May play a critical role in biogenesis of 30S subunits.</text>
</comment>
<comment type="catalytic activity">
    <reaction evidence="1">
        <text>adenosine(1518)/adenosine(1519) in 16S rRNA + 4 S-adenosyl-L-methionine = N(6)-dimethyladenosine(1518)/N(6)-dimethyladenosine(1519) in 16S rRNA + 4 S-adenosyl-L-homocysteine + 4 H(+)</text>
        <dbReference type="Rhea" id="RHEA:19609"/>
        <dbReference type="Rhea" id="RHEA-COMP:10232"/>
        <dbReference type="Rhea" id="RHEA-COMP:10233"/>
        <dbReference type="ChEBI" id="CHEBI:15378"/>
        <dbReference type="ChEBI" id="CHEBI:57856"/>
        <dbReference type="ChEBI" id="CHEBI:59789"/>
        <dbReference type="ChEBI" id="CHEBI:74411"/>
        <dbReference type="ChEBI" id="CHEBI:74493"/>
        <dbReference type="EC" id="2.1.1.182"/>
    </reaction>
</comment>
<comment type="subcellular location">
    <subcellularLocation>
        <location evidence="1">Cytoplasm</location>
    </subcellularLocation>
</comment>
<comment type="similarity">
    <text evidence="1">Belongs to the class I-like SAM-binding methyltransferase superfamily. rRNA adenine N(6)-methyltransferase family. RsmA subfamily.</text>
</comment>
<organism>
    <name type="scientific">Acinetobacter baylyi (strain ATCC 33305 / BD413 / ADP1)</name>
    <dbReference type="NCBI Taxonomy" id="62977"/>
    <lineage>
        <taxon>Bacteria</taxon>
        <taxon>Pseudomonadati</taxon>
        <taxon>Pseudomonadota</taxon>
        <taxon>Gammaproteobacteria</taxon>
        <taxon>Moraxellales</taxon>
        <taxon>Moraxellaceae</taxon>
        <taxon>Acinetobacter</taxon>
    </lineage>
</organism>
<protein>
    <recommendedName>
        <fullName evidence="1">Ribosomal RNA small subunit methyltransferase A</fullName>
        <ecNumber evidence="1">2.1.1.182</ecNumber>
    </recommendedName>
    <alternativeName>
        <fullName evidence="1">16S rRNA (adenine(1518)-N(6)/adenine(1519)-N(6))-dimethyltransferase</fullName>
    </alternativeName>
    <alternativeName>
        <fullName evidence="1">16S rRNA dimethyladenosine transferase</fullName>
    </alternativeName>
    <alternativeName>
        <fullName evidence="1">16S rRNA dimethylase</fullName>
    </alternativeName>
    <alternativeName>
        <fullName evidence="1">S-adenosylmethionine-6-N', N'-adenosyl(rRNA) dimethyltransferase</fullName>
    </alternativeName>
</protein>
<sequence length="274" mass="30693">MEVFMYQINALNPKEEGHKARKRFGQNFLHDQRVIAKIVRSVNPRPGDNVVEIGPGLAALTSPLIGECDALTVVELDRDLAAGLPDRVPHPERLTIVEADALKYDFSQLATQESPLRVVGNLPYNISTPLLFHLLEFGDKVKDMHFMLQKEVVDRITAEPNTKEYGRLSVMIQYFCQPTFLFEVPAGAFNPPPKVTSAVFRLVPYKEKPIVAKDEKALSRLVGHVFTQRRKTLRNSLKGMLADDAFDKAGIDPMARPETLTLAQFVALSDQMVP</sequence>
<accession>Q6F8A0</accession>
<name>RSMA_ACIAD</name>
<reference key="1">
    <citation type="journal article" date="2004" name="Nucleic Acids Res.">
        <title>Unique features revealed by the genome sequence of Acinetobacter sp. ADP1, a versatile and naturally transformation competent bacterium.</title>
        <authorList>
            <person name="Barbe V."/>
            <person name="Vallenet D."/>
            <person name="Fonknechten N."/>
            <person name="Kreimeyer A."/>
            <person name="Oztas S."/>
            <person name="Labarre L."/>
            <person name="Cruveiller S."/>
            <person name="Robert C."/>
            <person name="Duprat S."/>
            <person name="Wincker P."/>
            <person name="Ornston L.N."/>
            <person name="Weissenbach J."/>
            <person name="Marliere P."/>
            <person name="Cohen G.N."/>
            <person name="Medigue C."/>
        </authorList>
    </citation>
    <scope>NUCLEOTIDE SEQUENCE [LARGE SCALE GENOMIC DNA]</scope>
    <source>
        <strain>ATCC 33305 / BD413 / ADP1</strain>
    </source>
</reference>
<evidence type="ECO:0000255" key="1">
    <source>
        <dbReference type="HAMAP-Rule" id="MF_00607"/>
    </source>
</evidence>
<gene>
    <name evidence="1" type="primary">rsmA</name>
    <name evidence="1" type="synonym">ksgA</name>
    <name type="ordered locus">ACIAD3009</name>
</gene>